<protein>
    <recommendedName>
        <fullName>tRNA threonylcarbamoyladenosine biosynthesis protein TsaB</fullName>
    </recommendedName>
    <alternativeName>
        <fullName>t(6)A37 threonylcarbamoyladenosine biosynthesis protein TsaB</fullName>
    </alternativeName>
</protein>
<feature type="chain" id="PRO_0000096994" description="tRNA threonylcarbamoyladenosine biosynthesis protein TsaB">
    <location>
        <begin position="1"/>
        <end position="221"/>
    </location>
</feature>
<organism>
    <name type="scientific">Buchnera aphidicola subsp. Baizongia pistaciae (strain Bp)</name>
    <dbReference type="NCBI Taxonomy" id="224915"/>
    <lineage>
        <taxon>Bacteria</taxon>
        <taxon>Pseudomonadati</taxon>
        <taxon>Pseudomonadota</taxon>
        <taxon>Gammaproteobacteria</taxon>
        <taxon>Enterobacterales</taxon>
        <taxon>Erwiniaceae</taxon>
        <taxon>Buchnera</taxon>
    </lineage>
</organism>
<keyword id="KW-0963">Cytoplasm</keyword>
<keyword id="KW-1185">Reference proteome</keyword>
<keyword id="KW-0819">tRNA processing</keyword>
<gene>
    <name type="primary">tsaB</name>
    <name type="ordered locus">bbp_301</name>
</gene>
<evidence type="ECO:0000250" key="1"/>
<evidence type="ECO:0000305" key="2"/>
<reference key="1">
    <citation type="journal article" date="2003" name="Proc. Natl. Acad. Sci. U.S.A.">
        <title>Reductive genome evolution in Buchnera aphidicola.</title>
        <authorList>
            <person name="van Ham R.C.H.J."/>
            <person name="Kamerbeek J."/>
            <person name="Palacios C."/>
            <person name="Rausell C."/>
            <person name="Abascal F."/>
            <person name="Bastolla U."/>
            <person name="Fernandez J.M."/>
            <person name="Jimenez L."/>
            <person name="Postigo M."/>
            <person name="Silva F.J."/>
            <person name="Tamames J."/>
            <person name="Viguera E."/>
            <person name="Latorre A."/>
            <person name="Valencia A."/>
            <person name="Moran F."/>
            <person name="Moya A."/>
        </authorList>
    </citation>
    <scope>NUCLEOTIDE SEQUENCE [LARGE SCALE GENOMIC DNA]</scope>
    <source>
        <strain>Bp</strain>
    </source>
</reference>
<name>TSAB_BUCBP</name>
<dbReference type="EMBL" id="AE016826">
    <property type="protein sequence ID" value="AAO27026.1"/>
    <property type="molecule type" value="Genomic_DNA"/>
</dbReference>
<dbReference type="RefSeq" id="WP_011091427.1">
    <property type="nucleotide sequence ID" value="NC_004545.1"/>
</dbReference>
<dbReference type="SMR" id="Q89AI5"/>
<dbReference type="STRING" id="224915.bbp_301"/>
<dbReference type="KEGG" id="bab:bbp_301"/>
<dbReference type="eggNOG" id="COG1214">
    <property type="taxonomic scope" value="Bacteria"/>
</dbReference>
<dbReference type="HOGENOM" id="CLU_064886_2_0_6"/>
<dbReference type="OrthoDB" id="9809995at2"/>
<dbReference type="Proteomes" id="UP000000601">
    <property type="component" value="Chromosome"/>
</dbReference>
<dbReference type="GO" id="GO:0005829">
    <property type="term" value="C:cytosol"/>
    <property type="evidence" value="ECO:0007669"/>
    <property type="project" value="TreeGrafter"/>
</dbReference>
<dbReference type="GO" id="GO:0002949">
    <property type="term" value="P:tRNA threonylcarbamoyladenosine modification"/>
    <property type="evidence" value="ECO:0007669"/>
    <property type="project" value="InterPro"/>
</dbReference>
<dbReference type="CDD" id="cd24032">
    <property type="entry name" value="ASKHA_NBD_TsaB"/>
    <property type="match status" value="1"/>
</dbReference>
<dbReference type="Gene3D" id="3.30.420.40">
    <property type="match status" value="2"/>
</dbReference>
<dbReference type="InterPro" id="IPR043129">
    <property type="entry name" value="ATPase_NBD"/>
</dbReference>
<dbReference type="InterPro" id="IPR000905">
    <property type="entry name" value="Gcp-like_dom"/>
</dbReference>
<dbReference type="InterPro" id="IPR022496">
    <property type="entry name" value="T6A_TsaB"/>
</dbReference>
<dbReference type="NCBIfam" id="TIGR03725">
    <property type="entry name" value="T6A_YeaZ"/>
    <property type="match status" value="1"/>
</dbReference>
<dbReference type="PANTHER" id="PTHR11735">
    <property type="entry name" value="TRNA N6-ADENOSINE THREONYLCARBAMOYLTRANSFERASE"/>
    <property type="match status" value="1"/>
</dbReference>
<dbReference type="PANTHER" id="PTHR11735:SF11">
    <property type="entry name" value="TRNA THREONYLCARBAMOYLADENOSINE BIOSYNTHESIS PROTEIN TSAB"/>
    <property type="match status" value="1"/>
</dbReference>
<dbReference type="Pfam" id="PF00814">
    <property type="entry name" value="TsaD"/>
    <property type="match status" value="1"/>
</dbReference>
<dbReference type="SUPFAM" id="SSF53067">
    <property type="entry name" value="Actin-like ATPase domain"/>
    <property type="match status" value="2"/>
</dbReference>
<comment type="function">
    <text evidence="1">Required for the formation of a threonylcarbamoyl group on adenosine at position 37 (t(6)A37) in tRNAs that read codons beginning with adenine. Is involved in the transfer of the threonylcarbamoyl moiety of threonylcarbamoyl-AMP (TC-AMP) to the N6 group of A37, together with TsaD and TsaE; this reaction does not require ATP in vitro. TsaB seems to play an indirect role in the t(6)A biosynthesis pathway, possibly in regulating the core enzymatic function of TsaD (By similarity).</text>
</comment>
<comment type="subcellular location">
    <subcellularLocation>
        <location evidence="1">Cytoplasm</location>
    </subcellularLocation>
</comment>
<comment type="similarity">
    <text evidence="2">Belongs to the KAE1 / TsaD family. TsaB subfamily.</text>
</comment>
<accession>Q89AI5</accession>
<sequence>MLKTILAFDTSMSVCSISLLHKNRKYNIQKECRNNHTLYLLPMIHEILKKNHVSLNEINIIATSKGPGSFSGVRIALAVAQGISLGLNLPHVISLSTILIMAEQVWNNHKISKVLAIITVNKTSVYWIQYSRNFHGLWIKKSKAIILNLSKALEKILSLKKQWALVGNGWDKFPKNILKKIFITNITFPNSKYIISLISANSIYQKKEVLHKIIPIYLNER</sequence>
<proteinExistence type="inferred from homology"/>